<evidence type="ECO:0000255" key="1">
    <source>
        <dbReference type="HAMAP-Rule" id="MF_01318"/>
    </source>
</evidence>
<evidence type="ECO:0000305" key="2"/>
<keyword id="KW-0678">Repressor</keyword>
<keyword id="KW-0687">Ribonucleoprotein</keyword>
<keyword id="KW-0689">Ribosomal protein</keyword>
<keyword id="KW-0694">RNA-binding</keyword>
<keyword id="KW-0699">rRNA-binding</keyword>
<keyword id="KW-0810">Translation regulation</keyword>
<keyword id="KW-0820">tRNA-binding</keyword>
<gene>
    <name evidence="1" type="primary">rplA</name>
    <name type="ordered locus">ECP_4197</name>
</gene>
<feature type="chain" id="PRO_0000308005" description="Large ribosomal subunit protein uL1">
    <location>
        <begin position="1"/>
        <end position="234"/>
    </location>
</feature>
<sequence length="234" mass="24730">MAKLTKRMRVIREKVDATKQYDINEAIALLKELATAKFVESVDVAVNLGIDARKSDQNVRGATVLPHGTGRSVRVAVFTQGANAEAAKAAGAELVGMEDLADQIKKGEMNFDVVIASPDAMRVVGQLGQVLGPRGLMPNPKVGTVTPNVAEAVKNAKAGQVRYRNDKNGIIHTTIGKVDFDADKLKENLEALLVALKKAKPTQAKGVYIKKVSISTTMGAGVAVDQAGLSASVN</sequence>
<protein>
    <recommendedName>
        <fullName evidence="1">Large ribosomal subunit protein uL1</fullName>
    </recommendedName>
    <alternativeName>
        <fullName evidence="2">50S ribosomal protein L1</fullName>
    </alternativeName>
</protein>
<accession>Q0TA81</accession>
<comment type="function">
    <text evidence="1">Binds directly to 23S rRNA. The L1 stalk is quite mobile in the ribosome, and is involved in E site tRNA release.</text>
</comment>
<comment type="function">
    <text evidence="1">Protein L1 is also a translational repressor protein, it controls the translation of the L11 operon by binding to its mRNA.</text>
</comment>
<comment type="subunit">
    <text evidence="1">Part of the 50S ribosomal subunit.</text>
</comment>
<comment type="similarity">
    <text evidence="1">Belongs to the universal ribosomal protein uL1 family.</text>
</comment>
<proteinExistence type="inferred from homology"/>
<name>RL1_ECOL5</name>
<organism>
    <name type="scientific">Escherichia coli O6:K15:H31 (strain 536 / UPEC)</name>
    <dbReference type="NCBI Taxonomy" id="362663"/>
    <lineage>
        <taxon>Bacteria</taxon>
        <taxon>Pseudomonadati</taxon>
        <taxon>Pseudomonadota</taxon>
        <taxon>Gammaproteobacteria</taxon>
        <taxon>Enterobacterales</taxon>
        <taxon>Enterobacteriaceae</taxon>
        <taxon>Escherichia</taxon>
    </lineage>
</organism>
<dbReference type="EMBL" id="CP000247">
    <property type="protein sequence ID" value="ABG72148.1"/>
    <property type="molecule type" value="Genomic_DNA"/>
</dbReference>
<dbReference type="RefSeq" id="WP_001096684.1">
    <property type="nucleotide sequence ID" value="NC_008253.1"/>
</dbReference>
<dbReference type="SMR" id="Q0TA81"/>
<dbReference type="GeneID" id="93777910"/>
<dbReference type="KEGG" id="ecp:ECP_4197"/>
<dbReference type="HOGENOM" id="CLU_062853_0_0_6"/>
<dbReference type="Proteomes" id="UP000009182">
    <property type="component" value="Chromosome"/>
</dbReference>
<dbReference type="GO" id="GO:0022625">
    <property type="term" value="C:cytosolic large ribosomal subunit"/>
    <property type="evidence" value="ECO:0007669"/>
    <property type="project" value="TreeGrafter"/>
</dbReference>
<dbReference type="GO" id="GO:0019843">
    <property type="term" value="F:rRNA binding"/>
    <property type="evidence" value="ECO:0007669"/>
    <property type="project" value="UniProtKB-UniRule"/>
</dbReference>
<dbReference type="GO" id="GO:0003735">
    <property type="term" value="F:structural constituent of ribosome"/>
    <property type="evidence" value="ECO:0007669"/>
    <property type="project" value="InterPro"/>
</dbReference>
<dbReference type="GO" id="GO:0000049">
    <property type="term" value="F:tRNA binding"/>
    <property type="evidence" value="ECO:0007669"/>
    <property type="project" value="UniProtKB-KW"/>
</dbReference>
<dbReference type="GO" id="GO:0006417">
    <property type="term" value="P:regulation of translation"/>
    <property type="evidence" value="ECO:0007669"/>
    <property type="project" value="UniProtKB-KW"/>
</dbReference>
<dbReference type="GO" id="GO:0006412">
    <property type="term" value="P:translation"/>
    <property type="evidence" value="ECO:0007669"/>
    <property type="project" value="UniProtKB-UniRule"/>
</dbReference>
<dbReference type="CDD" id="cd00403">
    <property type="entry name" value="Ribosomal_L1"/>
    <property type="match status" value="1"/>
</dbReference>
<dbReference type="FunFam" id="3.40.50.790:FF:000001">
    <property type="entry name" value="50S ribosomal protein L1"/>
    <property type="match status" value="1"/>
</dbReference>
<dbReference type="Gene3D" id="3.30.190.20">
    <property type="match status" value="1"/>
</dbReference>
<dbReference type="Gene3D" id="3.40.50.790">
    <property type="match status" value="1"/>
</dbReference>
<dbReference type="HAMAP" id="MF_01318_B">
    <property type="entry name" value="Ribosomal_uL1_B"/>
    <property type="match status" value="1"/>
</dbReference>
<dbReference type="InterPro" id="IPR005878">
    <property type="entry name" value="Ribosom_uL1_bac-type"/>
</dbReference>
<dbReference type="InterPro" id="IPR002143">
    <property type="entry name" value="Ribosomal_uL1"/>
</dbReference>
<dbReference type="InterPro" id="IPR023674">
    <property type="entry name" value="Ribosomal_uL1-like"/>
</dbReference>
<dbReference type="InterPro" id="IPR028364">
    <property type="entry name" value="Ribosomal_uL1/biogenesis"/>
</dbReference>
<dbReference type="InterPro" id="IPR016095">
    <property type="entry name" value="Ribosomal_uL1_3-a/b-sand"/>
</dbReference>
<dbReference type="InterPro" id="IPR023673">
    <property type="entry name" value="Ribosomal_uL1_CS"/>
</dbReference>
<dbReference type="NCBIfam" id="TIGR01169">
    <property type="entry name" value="rplA_bact"/>
    <property type="match status" value="1"/>
</dbReference>
<dbReference type="PANTHER" id="PTHR36427">
    <property type="entry name" value="54S RIBOSOMAL PROTEIN L1, MITOCHONDRIAL"/>
    <property type="match status" value="1"/>
</dbReference>
<dbReference type="PANTHER" id="PTHR36427:SF3">
    <property type="entry name" value="LARGE RIBOSOMAL SUBUNIT PROTEIN UL1M"/>
    <property type="match status" value="1"/>
</dbReference>
<dbReference type="Pfam" id="PF00687">
    <property type="entry name" value="Ribosomal_L1"/>
    <property type="match status" value="1"/>
</dbReference>
<dbReference type="PIRSF" id="PIRSF002155">
    <property type="entry name" value="Ribosomal_L1"/>
    <property type="match status" value="1"/>
</dbReference>
<dbReference type="SUPFAM" id="SSF56808">
    <property type="entry name" value="Ribosomal protein L1"/>
    <property type="match status" value="1"/>
</dbReference>
<dbReference type="PROSITE" id="PS01199">
    <property type="entry name" value="RIBOSOMAL_L1"/>
    <property type="match status" value="1"/>
</dbReference>
<reference key="1">
    <citation type="journal article" date="2006" name="Mol. Microbiol.">
        <title>Role of pathogenicity island-associated integrases in the genome plasticity of uropathogenic Escherichia coli strain 536.</title>
        <authorList>
            <person name="Hochhut B."/>
            <person name="Wilde C."/>
            <person name="Balling G."/>
            <person name="Middendorf B."/>
            <person name="Dobrindt U."/>
            <person name="Brzuszkiewicz E."/>
            <person name="Gottschalk G."/>
            <person name="Carniel E."/>
            <person name="Hacker J."/>
        </authorList>
    </citation>
    <scope>NUCLEOTIDE SEQUENCE [LARGE SCALE GENOMIC DNA]</scope>
    <source>
        <strain>536 / UPEC</strain>
    </source>
</reference>